<accession>Q6DDM4</accession>
<proteinExistence type="evidence at transcript level"/>
<gene>
    <name type="primary">api5-a</name>
</gene>
<protein>
    <recommendedName>
        <fullName>Apoptosis inhibitor 5-A</fullName>
        <shortName>API-5A</shortName>
    </recommendedName>
</protein>
<dbReference type="EMBL" id="BC077529">
    <property type="protein sequence ID" value="AAH77529.1"/>
    <property type="molecule type" value="mRNA"/>
</dbReference>
<dbReference type="SMR" id="Q6DDM4"/>
<dbReference type="DNASU" id="446672"/>
<dbReference type="GeneID" id="446672"/>
<dbReference type="KEGG" id="xla:446672"/>
<dbReference type="AGR" id="Xenbase:XB-GENE-6256666"/>
<dbReference type="CTD" id="446672"/>
<dbReference type="Xenbase" id="XB-GENE-6256666">
    <property type="gene designation" value="api5.L"/>
</dbReference>
<dbReference type="OrthoDB" id="19224at2759"/>
<dbReference type="Proteomes" id="UP000186698">
    <property type="component" value="Chromosome 4L"/>
</dbReference>
<dbReference type="Bgee" id="446672">
    <property type="expression patterns" value="Expressed in gastrula and 19 other cell types or tissues"/>
</dbReference>
<dbReference type="GO" id="GO:0005634">
    <property type="term" value="C:nucleus"/>
    <property type="evidence" value="ECO:0000318"/>
    <property type="project" value="GO_Central"/>
</dbReference>
<dbReference type="GO" id="GO:0003723">
    <property type="term" value="F:RNA binding"/>
    <property type="evidence" value="ECO:0000318"/>
    <property type="project" value="GO_Central"/>
</dbReference>
<dbReference type="GO" id="GO:0006915">
    <property type="term" value="P:apoptotic process"/>
    <property type="evidence" value="ECO:0007669"/>
    <property type="project" value="UniProtKB-KW"/>
</dbReference>
<dbReference type="GO" id="GO:0043066">
    <property type="term" value="P:negative regulation of apoptotic process"/>
    <property type="evidence" value="ECO:0000318"/>
    <property type="project" value="GO_Central"/>
</dbReference>
<dbReference type="FunFam" id="1.25.10.10:FF:000092">
    <property type="entry name" value="apoptosis inhibitor 5 isoform X2"/>
    <property type="match status" value="1"/>
</dbReference>
<dbReference type="Gene3D" id="1.25.10.10">
    <property type="entry name" value="Leucine-rich Repeat Variant"/>
    <property type="match status" value="1"/>
</dbReference>
<dbReference type="InterPro" id="IPR008383">
    <property type="entry name" value="API5"/>
</dbReference>
<dbReference type="InterPro" id="IPR011989">
    <property type="entry name" value="ARM-like"/>
</dbReference>
<dbReference type="InterPro" id="IPR016024">
    <property type="entry name" value="ARM-type_fold"/>
</dbReference>
<dbReference type="PANTHER" id="PTHR12758:SF19">
    <property type="entry name" value="APOPTOSIS INHIBITOR 5"/>
    <property type="match status" value="1"/>
</dbReference>
<dbReference type="PANTHER" id="PTHR12758">
    <property type="entry name" value="APOPTOSIS INHIBITOR 5-RELATED"/>
    <property type="match status" value="1"/>
</dbReference>
<dbReference type="Pfam" id="PF05918">
    <property type="entry name" value="API5"/>
    <property type="match status" value="1"/>
</dbReference>
<dbReference type="SUPFAM" id="SSF48371">
    <property type="entry name" value="ARM repeat"/>
    <property type="match status" value="1"/>
</dbReference>
<reference key="1">
    <citation type="submission" date="2004-07" db="EMBL/GenBank/DDBJ databases">
        <authorList>
            <consortium name="NIH - Xenopus Gene Collection (XGC) project"/>
        </authorList>
    </citation>
    <scope>NUCLEOTIDE SEQUENCE [LARGE SCALE MRNA]</scope>
    <source>
        <tissue>Embryo</tissue>
    </source>
</reference>
<name>API5A_XENLA</name>
<sequence>MATVEELYRSYGILADAKDDVGQHKSAYQVIIDGVKGGAKEKRLAAQFIPKFFKHFPDLSDSALNAQLDLCEDEDVSIRRQAIKELSQFATGENLPRVADILTQLLQSDDSAEFNLVNNALLSIFKMDAKGTLGGLFSQILQGEDIVRERAIKFLATKMKTLPEETLTKEVDDYIFSESKKVLYDVTGEEFVLFMKILSALKNLQTVSGRQQLVDLVSEQAGLHQTLNPADPDSVDRLLQCMRQAVPLFSKNVHSTKFVTYFCEQVLPILSTLTSPAESIDVQLEVLKLLAEMSSFCGDMDKLESNLNKLFDKLLEFMPLPPEEVENGDTAANEEPKLQFSYVECLLFSFHQLGRKLPDFLIAKVDAEKLKDFKIRLQYFARGLQVYIRQLRLALQGKSGDALKTEENKIKVVALKITNNINVLIKDLFHNPPSYKSTVTLSWKPVQRTPDSGQKRTSDETSSTSPPKKPIVGPKRDSRQIYNPPSGKYSASVGAFSYEQRGGFQGGRGRGWGGRGNRSRGRIY</sequence>
<evidence type="ECO:0000250" key="1"/>
<evidence type="ECO:0000256" key="2">
    <source>
        <dbReference type="SAM" id="MobiDB-lite"/>
    </source>
</evidence>
<evidence type="ECO:0000305" key="3"/>
<feature type="chain" id="PRO_0000378095" description="Apoptosis inhibitor 5-A">
    <location>
        <begin position="1"/>
        <end position="524"/>
    </location>
</feature>
<feature type="region of interest" description="ARM-like and Heat-like helical repeats" evidence="1">
    <location>
        <begin position="1"/>
        <end position="360"/>
    </location>
</feature>
<feature type="region of interest" description="Disordered" evidence="2">
    <location>
        <begin position="440"/>
        <end position="524"/>
    </location>
</feature>
<feature type="short sequence motif" description="Nuclear localization signal" evidence="1">
    <location>
        <begin position="455"/>
        <end position="476"/>
    </location>
</feature>
<feature type="compositionally biased region" description="Gly residues" evidence="2">
    <location>
        <begin position="503"/>
        <end position="516"/>
    </location>
</feature>
<comment type="function">
    <text>May be an antiapoptotic factor.</text>
</comment>
<comment type="subunit">
    <text evidence="1">Monomer.</text>
</comment>
<comment type="subcellular location">
    <subcellularLocation>
        <location evidence="1">Nucleus</location>
    </subcellularLocation>
</comment>
<comment type="similarity">
    <text evidence="3">Belongs to the API5 family.</text>
</comment>
<organism>
    <name type="scientific">Xenopus laevis</name>
    <name type="common">African clawed frog</name>
    <dbReference type="NCBI Taxonomy" id="8355"/>
    <lineage>
        <taxon>Eukaryota</taxon>
        <taxon>Metazoa</taxon>
        <taxon>Chordata</taxon>
        <taxon>Craniata</taxon>
        <taxon>Vertebrata</taxon>
        <taxon>Euteleostomi</taxon>
        <taxon>Amphibia</taxon>
        <taxon>Batrachia</taxon>
        <taxon>Anura</taxon>
        <taxon>Pipoidea</taxon>
        <taxon>Pipidae</taxon>
        <taxon>Xenopodinae</taxon>
        <taxon>Xenopus</taxon>
        <taxon>Xenopus</taxon>
    </lineage>
</organism>
<keyword id="KW-0053">Apoptosis</keyword>
<keyword id="KW-0539">Nucleus</keyword>
<keyword id="KW-1185">Reference proteome</keyword>
<keyword id="KW-0677">Repeat</keyword>